<evidence type="ECO:0000255" key="1">
    <source>
        <dbReference type="HAMAP-Rule" id="MF_01390"/>
    </source>
</evidence>
<organism>
    <name type="scientific">Rhamnus cathartica</name>
    <name type="common">Common buckthorn</name>
    <dbReference type="NCBI Taxonomy" id="3610"/>
    <lineage>
        <taxon>Eukaryota</taxon>
        <taxon>Viridiplantae</taxon>
        <taxon>Streptophyta</taxon>
        <taxon>Embryophyta</taxon>
        <taxon>Tracheophyta</taxon>
        <taxon>Spermatophyta</taxon>
        <taxon>Magnoliopsida</taxon>
        <taxon>eudicotyledons</taxon>
        <taxon>Gunneridae</taxon>
        <taxon>Pentapetalae</taxon>
        <taxon>rosids</taxon>
        <taxon>fabids</taxon>
        <taxon>Rosales</taxon>
        <taxon>Rhamnaceae</taxon>
        <taxon>rhamnoid group</taxon>
        <taxon>Rhamneae</taxon>
        <taxon>Rhamnus</taxon>
    </lineage>
</organism>
<proteinExistence type="inferred from homology"/>
<protein>
    <recommendedName>
        <fullName evidence="1">Maturase K</fullName>
    </recommendedName>
    <alternativeName>
        <fullName evidence="1">Intron maturase</fullName>
    </alternativeName>
</protein>
<keyword id="KW-0150">Chloroplast</keyword>
<keyword id="KW-0507">mRNA processing</keyword>
<keyword id="KW-0934">Plastid</keyword>
<keyword id="KW-0694">RNA-binding</keyword>
<keyword id="KW-0819">tRNA processing</keyword>
<geneLocation type="chloroplast"/>
<name>MATK_RHACA</name>
<feature type="chain" id="PRO_0000143674" description="Maturase K">
    <location>
        <begin position="1"/>
        <end position="503"/>
    </location>
</feature>
<gene>
    <name evidence="1" type="primary">matK</name>
</gene>
<sequence>MEEFQRYFELDRSQQHDLLYPLIFREYIYAFAHDHGLNRSDLLENVGYDNKSSLRIVKRFITRMYRQNHLIISANDSTQNKCFGYNKNLYSQMISEGFAVIVEIPFSLRLPPSGTEIVKYYNLQSIHSIFPFLEDKFPRLNYVLDVLIPYPIHLEILVQILRYWVKDASSLHLLRLFLHEYSNWNSFITTKKSISIFSKTNPRLFLFLYNSYACEYESILLFLRNQFSHLRLTSSGVFFERIYFYGKIKHPVEEVFANDFPAIRRVFKDPFMHYVRYQGKSFLVSKDTPLLMNKWKYYLVHLWQWHFYVWAQPGRIYINLLFKHSFGFLGYLSSVRQNLSLVRSQTLENSFIMDNAIKKLDTLAPISPLIGSLAKMQFCSALGHPVSKSTWTDSSDFSIINRFARICRNLSHYYSGSSKKKNLYRIKYILRLSCVKTLACKHKSTVRVFLKRFGSELLEEFFTEEEDVLSFIFPRTYSTFRSLYRGRVWYLDIVCINDLVNQE</sequence>
<accession>Q85V90</accession>
<comment type="function">
    <text evidence="1">Usually encoded in the trnK tRNA gene intron. Probably assists in splicing its own and other chloroplast group II introns.</text>
</comment>
<comment type="subcellular location">
    <subcellularLocation>
        <location>Plastid</location>
        <location>Chloroplast</location>
    </subcellularLocation>
</comment>
<comment type="similarity">
    <text evidence="1">Belongs to the intron maturase 2 family. MatK subfamily.</text>
</comment>
<reference key="1">
    <citation type="journal article" date="2003" name="Am. J. Bot.">
        <title>Angiosperm phlyogeny based on matK sequence information.</title>
        <authorList>
            <person name="Hilu K.W."/>
            <person name="Borsch T."/>
            <person name="Mueller K.F."/>
            <person name="Soltis D.E."/>
            <person name="Soltis P.S."/>
            <person name="Savolainen V."/>
            <person name="Chase M.W."/>
            <person name="Powell M."/>
            <person name="Alice L.A."/>
            <person name="Evans R.C."/>
            <person name="Sanquet H."/>
            <person name="Neinhuis C."/>
            <person name="Slotta T.A.B."/>
            <person name="Rohwer J.G."/>
            <person name="Campbell C.S."/>
            <person name="Chatrou L.W."/>
        </authorList>
    </citation>
    <scope>NUCLEOTIDE SEQUENCE [GENOMIC DNA]</scope>
</reference>
<dbReference type="EMBL" id="AY257533">
    <property type="protein sequence ID" value="AAP31040.1"/>
    <property type="molecule type" value="Genomic_DNA"/>
</dbReference>
<dbReference type="GO" id="GO:0009507">
    <property type="term" value="C:chloroplast"/>
    <property type="evidence" value="ECO:0007669"/>
    <property type="project" value="UniProtKB-SubCell"/>
</dbReference>
<dbReference type="GO" id="GO:0003723">
    <property type="term" value="F:RNA binding"/>
    <property type="evidence" value="ECO:0007669"/>
    <property type="project" value="UniProtKB-KW"/>
</dbReference>
<dbReference type="GO" id="GO:0006397">
    <property type="term" value="P:mRNA processing"/>
    <property type="evidence" value="ECO:0007669"/>
    <property type="project" value="UniProtKB-KW"/>
</dbReference>
<dbReference type="GO" id="GO:0008380">
    <property type="term" value="P:RNA splicing"/>
    <property type="evidence" value="ECO:0007669"/>
    <property type="project" value="UniProtKB-UniRule"/>
</dbReference>
<dbReference type="GO" id="GO:0008033">
    <property type="term" value="P:tRNA processing"/>
    <property type="evidence" value="ECO:0007669"/>
    <property type="project" value="UniProtKB-KW"/>
</dbReference>
<dbReference type="HAMAP" id="MF_01390">
    <property type="entry name" value="MatK"/>
    <property type="match status" value="1"/>
</dbReference>
<dbReference type="InterPro" id="IPR024937">
    <property type="entry name" value="Domain_X"/>
</dbReference>
<dbReference type="InterPro" id="IPR002866">
    <property type="entry name" value="Maturase_MatK"/>
</dbReference>
<dbReference type="InterPro" id="IPR024942">
    <property type="entry name" value="Maturase_MatK_N"/>
</dbReference>
<dbReference type="PANTHER" id="PTHR34811">
    <property type="entry name" value="MATURASE K"/>
    <property type="match status" value="1"/>
</dbReference>
<dbReference type="PANTHER" id="PTHR34811:SF1">
    <property type="entry name" value="MATURASE K"/>
    <property type="match status" value="1"/>
</dbReference>
<dbReference type="Pfam" id="PF01348">
    <property type="entry name" value="Intron_maturas2"/>
    <property type="match status" value="1"/>
</dbReference>
<dbReference type="Pfam" id="PF01824">
    <property type="entry name" value="MatK_N"/>
    <property type="match status" value="1"/>
</dbReference>